<feature type="chain" id="PRO_0000398195" description="Sucrose transport protein SUT5">
    <location>
        <begin position="1"/>
        <end position="535"/>
    </location>
</feature>
<feature type="topological domain" description="Cytoplasmic" evidence="2">
    <location>
        <begin position="1"/>
        <end position="53"/>
    </location>
</feature>
<feature type="transmembrane region" description="Helical" evidence="2">
    <location>
        <begin position="54"/>
        <end position="74"/>
    </location>
</feature>
<feature type="topological domain" description="Extracellular" evidence="2">
    <location>
        <begin position="75"/>
        <end position="87"/>
    </location>
</feature>
<feature type="transmembrane region" description="Helical" evidence="2">
    <location>
        <begin position="88"/>
        <end position="108"/>
    </location>
</feature>
<feature type="topological domain" description="Cytoplasmic" evidence="2">
    <location>
        <begin position="109"/>
        <end position="122"/>
    </location>
</feature>
<feature type="transmembrane region" description="Helical" evidence="2">
    <location>
        <begin position="123"/>
        <end position="143"/>
    </location>
</feature>
<feature type="topological domain" description="Extracellular" evidence="2">
    <location>
        <begin position="144"/>
        <end position="163"/>
    </location>
</feature>
<feature type="transmembrane region" description="Helical" evidence="2">
    <location>
        <begin position="164"/>
        <end position="184"/>
    </location>
</feature>
<feature type="topological domain" description="Cytoplasmic" evidence="2">
    <location>
        <begin position="185"/>
        <end position="203"/>
    </location>
</feature>
<feature type="transmembrane region" description="Helical" evidence="2">
    <location>
        <begin position="204"/>
        <end position="224"/>
    </location>
</feature>
<feature type="topological domain" description="Extracellular" evidence="2">
    <location>
        <begin position="225"/>
        <end position="249"/>
    </location>
</feature>
<feature type="transmembrane region" description="Helical" evidence="2">
    <location>
        <begin position="250"/>
        <end position="270"/>
    </location>
</feature>
<feature type="topological domain" description="Cytoplasmic" evidence="2">
    <location>
        <begin position="271"/>
        <end position="302"/>
    </location>
</feature>
<feature type="transmembrane region" description="Helical" evidence="2">
    <location>
        <begin position="303"/>
        <end position="323"/>
    </location>
</feature>
<feature type="topological domain" description="Extracellular" evidence="2">
    <location>
        <begin position="324"/>
        <end position="354"/>
    </location>
</feature>
<feature type="transmembrane region" description="Helical" evidence="2">
    <location>
        <begin position="355"/>
        <end position="375"/>
    </location>
</feature>
<feature type="topological domain" description="Cytoplasmic" evidence="2">
    <location>
        <begin position="376"/>
        <end position="384"/>
    </location>
</feature>
<feature type="transmembrane region" description="Helical" evidence="2">
    <location>
        <begin position="385"/>
        <end position="405"/>
    </location>
</feature>
<feature type="topological domain" description="Extracellular" evidence="2">
    <location>
        <begin position="406"/>
        <end position="429"/>
    </location>
</feature>
<feature type="transmembrane region" description="Helical" evidence="2">
    <location>
        <begin position="430"/>
        <end position="450"/>
    </location>
</feature>
<feature type="topological domain" description="Cytoplasmic" evidence="2">
    <location>
        <begin position="451"/>
        <end position="465"/>
    </location>
</feature>
<feature type="transmembrane region" description="Helical" evidence="2">
    <location>
        <begin position="466"/>
        <end position="486"/>
    </location>
</feature>
<feature type="topological domain" description="Extracellular" evidence="2">
    <location>
        <begin position="487"/>
        <end position="498"/>
    </location>
</feature>
<feature type="transmembrane region" description="Helical" evidence="2">
    <location>
        <begin position="499"/>
        <end position="519"/>
    </location>
</feature>
<feature type="topological domain" description="Cytoplasmic" evidence="2">
    <location>
        <begin position="520"/>
        <end position="535"/>
    </location>
</feature>
<feature type="sequence conflict" description="In Ref. 1; BAC67165." evidence="6" ref="1">
    <original>T</original>
    <variation>M</variation>
    <location>
        <position position="26"/>
    </location>
</feature>
<feature type="sequence conflict" description="In Ref. 2; AAY83289." evidence="6" ref="2">
    <original>Q</original>
    <variation>R</variation>
    <location>
        <position position="104"/>
    </location>
</feature>
<feature type="sequence conflict" description="In Ref. 2; AAY83289." evidence="6" ref="2">
    <original>V</original>
    <variation>A</variation>
    <location>
        <position position="169"/>
    </location>
</feature>
<feature type="sequence conflict" description="In Ref. 2; AAY83289." evidence="6" ref="2">
    <original>F</original>
    <variation>Y</variation>
    <location>
        <position position="174"/>
    </location>
</feature>
<feature type="sequence conflict" description="In Ref. 1; BAC67165." evidence="6" ref="1">
    <original>N</original>
    <variation>D</variation>
    <location>
        <position position="226"/>
    </location>
</feature>
<feature type="sequence conflict" description="In Ref. 2; AAY83289." evidence="6" ref="2">
    <original>E</original>
    <variation>K</variation>
    <location>
        <position position="355"/>
    </location>
</feature>
<feature type="sequence conflict" description="In Ref. 2; AAY83289." evidence="6" ref="2">
    <original>A</original>
    <variation>T</variation>
    <location>
        <position position="418"/>
    </location>
</feature>
<gene>
    <name type="primary">SUT5</name>
    <name type="synonym">SUT5Z</name>
    <name type="ordered locus">Os02g0576600</name>
    <name type="ordered locus">LOC_Os02g36700</name>
    <name type="ORF">B1342F01.9</name>
</gene>
<keyword id="KW-1003">Cell membrane</keyword>
<keyword id="KW-0472">Membrane</keyword>
<keyword id="KW-1185">Reference proteome</keyword>
<keyword id="KW-0762">Sugar transport</keyword>
<keyword id="KW-0769">Symport</keyword>
<keyword id="KW-0812">Transmembrane</keyword>
<keyword id="KW-1133">Transmembrane helix</keyword>
<keyword id="KW-0813">Transport</keyword>
<protein>
    <recommendedName>
        <fullName>Sucrose transport protein SUT5</fullName>
    </recommendedName>
    <alternativeName>
        <fullName>Sucrose permease 5</fullName>
    </alternativeName>
    <alternativeName>
        <fullName>Sucrose transporter 5</fullName>
        <shortName>OsSUT5</shortName>
    </alternativeName>
    <alternativeName>
        <fullName>Sucrose-proton symporter 5</fullName>
    </alternativeName>
</protein>
<organism>
    <name type="scientific">Oryza sativa subsp. japonica</name>
    <name type="common">Rice</name>
    <dbReference type="NCBI Taxonomy" id="39947"/>
    <lineage>
        <taxon>Eukaryota</taxon>
        <taxon>Viridiplantae</taxon>
        <taxon>Streptophyta</taxon>
        <taxon>Embryophyta</taxon>
        <taxon>Tracheophyta</taxon>
        <taxon>Spermatophyta</taxon>
        <taxon>Magnoliopsida</taxon>
        <taxon>Liliopsida</taxon>
        <taxon>Poales</taxon>
        <taxon>Poaceae</taxon>
        <taxon>BOP clade</taxon>
        <taxon>Oryzoideae</taxon>
        <taxon>Oryzeae</taxon>
        <taxon>Oryzinae</taxon>
        <taxon>Oryza</taxon>
        <taxon>Oryza sativa</taxon>
    </lineage>
</organism>
<comment type="function">
    <text evidence="5">Responsible for the transport of sucrose into the cell, with the concomitant uptake of protons (symport system). Can also transport other glucosides such as maltose, arbutin, salicin, helicin, alpha-phenylglucoside and beta-phenylglucoside.</text>
</comment>
<comment type="biophysicochemical properties">
    <kinetics>
        <KM evidence="5">2.32 mM for sucrose (at pH 5.6)</KM>
    </kinetics>
    <phDependence>
        <text evidence="5">Optimum pH is 5.</text>
    </phDependence>
</comment>
<comment type="pathway">
    <text>Glycan biosynthesis; sucrose metabolism.</text>
</comment>
<comment type="subunit">
    <text evidence="1">Homodimer.</text>
</comment>
<comment type="subcellular location">
    <subcellularLocation>
        <location evidence="6">Cell membrane</location>
        <topology evidence="6">Multi-pass membrane protein</topology>
    </subcellularLocation>
</comment>
<comment type="tissue specificity">
    <text evidence="3 4">Widely expressed. Highest expression in sink leaves and lowest in germinating seeds.</text>
</comment>
<comment type="developmental stage">
    <text evidence="3 4">Expressed in developing caryopses from 1 to 5 days after flowering (DAF) and then declines to nearly undetectable levels by 15 DAF.</text>
</comment>
<comment type="similarity">
    <text evidence="6">Belongs to the glycoside-pentoside-hexuronide (GPH) cation symporter transporter (TC 2.A.2.4) family.</text>
</comment>
<evidence type="ECO:0000250" key="1"/>
<evidence type="ECO:0000255" key="2"/>
<evidence type="ECO:0000269" key="3">
    <source>
    </source>
</evidence>
<evidence type="ECO:0000269" key="4">
    <source>
    </source>
</evidence>
<evidence type="ECO:0000269" key="5">
    <source>
    </source>
</evidence>
<evidence type="ECO:0000305" key="6"/>
<reference key="1">
    <citation type="journal article" date="2003" name="Plant Cell Physiol.">
        <title>The sucrose transporter gene family in rice.</title>
        <authorList>
            <person name="Aoki N."/>
            <person name="Hirose T."/>
            <person name="Scofield G.N."/>
            <person name="Whitfeld P.R."/>
            <person name="Furbank R.T."/>
        </authorList>
    </citation>
    <scope>NUCLEOTIDE SEQUENCE [MRNA]</scope>
    <scope>TISSUE SPECIFICITY</scope>
    <scope>DEVELOPMENTAL STAGE</scope>
    <source>
        <strain>cv. Nipponbare</strain>
        <tissue>Panicle</tissue>
    </source>
</reference>
<reference key="2">
    <citation type="journal article" date="2008" name="J. Integr. Plant Biol.">
        <title>Cloning and expression analysis of rice sucrose transporter genes OsSUT2M and OsSUT5Z.</title>
        <authorList>
            <person name="Sun A.J."/>
            <person name="Xu H.L."/>
            <person name="Gong W.K."/>
            <person name="Zhai H.L."/>
            <person name="Meng K."/>
            <person name="Wang Y.Q."/>
            <person name="Wei X.L."/>
            <person name="Xiao G.F."/>
            <person name="Zhu Z."/>
        </authorList>
    </citation>
    <scope>NUCLEOTIDE SEQUENCE [MRNA]</scope>
    <scope>TISSUE SPECIFICITY</scope>
    <scope>DEVELOPMENTAL STAGE</scope>
    <source>
        <strain>cv. Zhonghua 11</strain>
        <tissue>Grain</tissue>
    </source>
</reference>
<reference key="3">
    <citation type="journal article" date="2005" name="Nature">
        <title>The map-based sequence of the rice genome.</title>
        <authorList>
            <consortium name="International rice genome sequencing project (IRGSP)"/>
        </authorList>
    </citation>
    <scope>NUCLEOTIDE SEQUENCE [LARGE SCALE GENOMIC DNA]</scope>
    <source>
        <strain>cv. Nipponbare</strain>
    </source>
</reference>
<reference key="4">
    <citation type="journal article" date="2008" name="Nucleic Acids Res.">
        <title>The rice annotation project database (RAP-DB): 2008 update.</title>
        <authorList>
            <consortium name="The rice annotation project (RAP)"/>
        </authorList>
    </citation>
    <scope>GENOME REANNOTATION</scope>
    <source>
        <strain>cv. Nipponbare</strain>
    </source>
</reference>
<reference key="5">
    <citation type="journal article" date="2013" name="Rice">
        <title>Improvement of the Oryza sativa Nipponbare reference genome using next generation sequence and optical map data.</title>
        <authorList>
            <person name="Kawahara Y."/>
            <person name="de la Bastide M."/>
            <person name="Hamilton J.P."/>
            <person name="Kanamori H."/>
            <person name="McCombie W.R."/>
            <person name="Ouyang S."/>
            <person name="Schwartz D.C."/>
            <person name="Tanaka T."/>
            <person name="Wu J."/>
            <person name="Zhou S."/>
            <person name="Childs K.L."/>
            <person name="Davidson R.M."/>
            <person name="Lin H."/>
            <person name="Quesada-Ocampo L."/>
            <person name="Vaillancourt B."/>
            <person name="Sakai H."/>
            <person name="Lee S.S."/>
            <person name="Kim J."/>
            <person name="Numa H."/>
            <person name="Itoh T."/>
            <person name="Buell C.R."/>
            <person name="Matsumoto T."/>
        </authorList>
    </citation>
    <scope>GENOME REANNOTATION</scope>
    <source>
        <strain>cv. Nipponbare</strain>
    </source>
</reference>
<reference key="6">
    <citation type="journal article" date="2003" name="Science">
        <title>Collection, mapping, and annotation of over 28,000 cDNA clones from japonica rice.</title>
        <authorList>
            <consortium name="The rice full-length cDNA consortium"/>
        </authorList>
    </citation>
    <scope>NUCLEOTIDE SEQUENCE [LARGE SCALE MRNA]</scope>
    <source>
        <strain>cv. Nipponbare</strain>
    </source>
</reference>
<reference key="7">
    <citation type="journal article" date="2010" name="Plant Cell Physiol.">
        <title>Transport activity of rice sucrose transporters OsSUT1 and OsSUT5.</title>
        <authorList>
            <person name="Sun Y."/>
            <person name="Reinders A."/>
            <person name="LaFleur K.R."/>
            <person name="Mori T."/>
            <person name="Ward J.M."/>
        </authorList>
    </citation>
    <scope>FUNCTION</scope>
    <scope>BIOPHYSICOCHEMICAL PROPERTIES</scope>
</reference>
<sequence length="535" mass="56979">MEEGRRGDREGKSAAGWTALSTTKTTLEEKRRLQANGSVGGDAGTSGFRRIVRLFFACMVAGGIQYGWALQLSLLSPYSQTLGISHSYVSLTWICGPIAGFVVQPIVGYYSDRCTMKMGRRRPFILVGCLIICISVMIIGFSADIGRHLGDTKEHCSTYTGPRWSAAMVYIVGFWFLDFANNTVQGPARAMMADLSAGHHGPNVGQSIFSLWMAIGSVLGYLSGANGKWHEWFPWLKTAACCDACANLKGAFFTAVLLIVVSMTVTMYLADEMPLDKQDVDTSGGGGCAVFVDLFKSLRNLPPAMFKVLAVTAVTWLSWFPFIQYNTDWMGREIYHGEPQGTAAKADVYDAGVREGAMGLLFCSVALGVTSFVIPKLCRRLTSKVVWSISNFLVFALMAVMVAVGMVSMRGYRPSLAAGLTGPDPTLKAVALVVFALIGIPQAVLFSVPWAVASEVTAEEGGGQGLAIGVLNIAIVVPQLVIALTAGPIDGAFNKGNTPAFGIGGAFAFICGVLALIWLPKTRGVSNAAVVAGGH</sequence>
<proteinExistence type="evidence at protein level"/>
<name>SUT5_ORYSJ</name>
<dbReference type="EMBL" id="AB091674">
    <property type="protein sequence ID" value="BAC67165.1"/>
    <property type="molecule type" value="mRNA"/>
</dbReference>
<dbReference type="EMBL" id="DQ072593">
    <property type="protein sequence ID" value="AAY83289.1"/>
    <property type="molecule type" value="mRNA"/>
</dbReference>
<dbReference type="EMBL" id="AP006070">
    <property type="protein sequence ID" value="BAD34249.1"/>
    <property type="molecule type" value="Genomic_DNA"/>
</dbReference>
<dbReference type="EMBL" id="AP008208">
    <property type="protein sequence ID" value="BAF09131.1"/>
    <property type="molecule type" value="Genomic_DNA"/>
</dbReference>
<dbReference type="EMBL" id="AP014958">
    <property type="protein sequence ID" value="BAS79385.1"/>
    <property type="molecule type" value="Genomic_DNA"/>
</dbReference>
<dbReference type="EMBL" id="AK073105">
    <property type="protein sequence ID" value="BAG93290.1"/>
    <property type="molecule type" value="mRNA"/>
</dbReference>
<dbReference type="RefSeq" id="XP_015624726.1">
    <property type="nucleotide sequence ID" value="XM_015769240.1"/>
</dbReference>
<dbReference type="SMR" id="Q69JW3"/>
<dbReference type="FunCoup" id="Q69JW3">
    <property type="interactions" value="577"/>
</dbReference>
<dbReference type="TCDB" id="2.A.2.4.11">
    <property type="family name" value="the glycoside-pentoside-hexuronide (gph):cation symporter family"/>
</dbReference>
<dbReference type="PaxDb" id="39947-Q69JW3"/>
<dbReference type="EnsemblPlants" id="Os02t0576600-01">
    <property type="protein sequence ID" value="Os02t0576600-01"/>
    <property type="gene ID" value="Os02g0576600"/>
</dbReference>
<dbReference type="Gramene" id="Os02t0576600-01">
    <property type="protein sequence ID" value="Os02t0576600-01"/>
    <property type="gene ID" value="Os02g0576600"/>
</dbReference>
<dbReference type="KEGG" id="dosa:Os02g0576600"/>
<dbReference type="eggNOG" id="KOG0637">
    <property type="taxonomic scope" value="Eukaryota"/>
</dbReference>
<dbReference type="HOGENOM" id="CLU_025234_3_0_1"/>
<dbReference type="InParanoid" id="Q69JW3"/>
<dbReference type="OMA" id="VSMRGYR"/>
<dbReference type="OrthoDB" id="28755at2759"/>
<dbReference type="UniPathway" id="UPA00238"/>
<dbReference type="Proteomes" id="UP000000763">
    <property type="component" value="Chromosome 2"/>
</dbReference>
<dbReference type="Proteomes" id="UP000059680">
    <property type="component" value="Chromosome 2"/>
</dbReference>
<dbReference type="GO" id="GO:0016020">
    <property type="term" value="C:membrane"/>
    <property type="evidence" value="ECO:0000318"/>
    <property type="project" value="GO_Central"/>
</dbReference>
<dbReference type="GO" id="GO:0005886">
    <property type="term" value="C:plasma membrane"/>
    <property type="evidence" value="ECO:0007669"/>
    <property type="project" value="UniProtKB-SubCell"/>
</dbReference>
<dbReference type="GO" id="GO:0042951">
    <property type="term" value="F:arbutin transmembrane transporter activity"/>
    <property type="evidence" value="ECO:0000314"/>
    <property type="project" value="UniProtKB"/>
</dbReference>
<dbReference type="GO" id="GO:0005364">
    <property type="term" value="F:maltose:proton symporter activity"/>
    <property type="evidence" value="ECO:0000314"/>
    <property type="project" value="UniProtKB"/>
</dbReference>
<dbReference type="GO" id="GO:0042950">
    <property type="term" value="F:salicin transmembrane transporter activity"/>
    <property type="evidence" value="ECO:0000314"/>
    <property type="project" value="UniProtKB"/>
</dbReference>
<dbReference type="GO" id="GO:0008506">
    <property type="term" value="F:sucrose:proton symporter activity"/>
    <property type="evidence" value="ECO:0000314"/>
    <property type="project" value="UniProtKB"/>
</dbReference>
<dbReference type="GO" id="GO:0015768">
    <property type="term" value="P:maltose transport"/>
    <property type="evidence" value="ECO:0000314"/>
    <property type="project" value="UniProtKB"/>
</dbReference>
<dbReference type="GO" id="GO:0005985">
    <property type="term" value="P:sucrose metabolic process"/>
    <property type="evidence" value="ECO:0007669"/>
    <property type="project" value="UniProtKB-UniPathway"/>
</dbReference>
<dbReference type="GO" id="GO:0015770">
    <property type="term" value="P:sucrose transport"/>
    <property type="evidence" value="ECO:0000314"/>
    <property type="project" value="UniProtKB"/>
</dbReference>
<dbReference type="CDD" id="cd17313">
    <property type="entry name" value="MFS_SLC45_SUC"/>
    <property type="match status" value="1"/>
</dbReference>
<dbReference type="FunFam" id="1.20.1250.20:FF:000366">
    <property type="entry name" value="Sucrose transport protein SUT5"/>
    <property type="match status" value="1"/>
</dbReference>
<dbReference type="FunFam" id="1.20.1250.20:FF:000182">
    <property type="entry name" value="Sucrose transporter SUC2"/>
    <property type="match status" value="1"/>
</dbReference>
<dbReference type="Gene3D" id="1.20.1250.20">
    <property type="entry name" value="MFS general substrate transporter like domains"/>
    <property type="match status" value="2"/>
</dbReference>
<dbReference type="InterPro" id="IPR011701">
    <property type="entry name" value="MFS"/>
</dbReference>
<dbReference type="InterPro" id="IPR036259">
    <property type="entry name" value="MFS_trans_sf"/>
</dbReference>
<dbReference type="InterPro" id="IPR005989">
    <property type="entry name" value="Suc_symporter_pln"/>
</dbReference>
<dbReference type="NCBIfam" id="TIGR01301">
    <property type="entry name" value="GPH_sucrose"/>
    <property type="match status" value="1"/>
</dbReference>
<dbReference type="PANTHER" id="PTHR19432:SF43">
    <property type="entry name" value="SUCROSE TRANSPORT PROTEIN SUT5"/>
    <property type="match status" value="1"/>
</dbReference>
<dbReference type="PANTHER" id="PTHR19432">
    <property type="entry name" value="SUGAR TRANSPORTER"/>
    <property type="match status" value="1"/>
</dbReference>
<dbReference type="Pfam" id="PF07690">
    <property type="entry name" value="MFS_1"/>
    <property type="match status" value="1"/>
</dbReference>
<dbReference type="SUPFAM" id="SSF103473">
    <property type="entry name" value="MFS general substrate transporter"/>
    <property type="match status" value="1"/>
</dbReference>
<accession>Q69JW3</accession>
<accession>A0A0N7KFJ4</accession>
<accession>Q4PKJ2</accession>
<accession>Q84KR3</accession>